<reference key="1">
    <citation type="journal article" date="1973" name="Biochim. Biophys. Acta">
        <title>The myoglobin of primates. 4. New World monkeys: Cebidae: (1) Saimiri sciureus (squirrel monkey); (2) Lagothrix lagothricha (Humboldt's woolly monkey). Callitrichidae: Callithrix jacchus (common marmoset).</title>
        <authorList>
            <person name="Romero-Herrera A.E."/>
            <person name="Lehmann H."/>
        </authorList>
    </citation>
    <scope>PROTEIN SEQUENCE OF 2-154</scope>
    <source>
        <tissue>Skeletal muscle</tissue>
    </source>
</reference>
<reference key="2">
    <citation type="journal article" date="1973" name="FEBS Lett.">
        <title>N-terminal chain elongation as evidence for duplication of myoglobin in three South American monkeys.</title>
        <authorList>
            <person name="Romero-Herrera A.E."/>
            <person name="Lehmann H."/>
        </authorList>
    </citation>
    <scope>PARTIAL PROTEIN SEQUENCE (MINOR COMPONENT)</scope>
</reference>
<gene>
    <name type="primary">MB</name>
</gene>
<feature type="initiator methionine" description="Removed" evidence="8">
    <location>
        <position position="1"/>
    </location>
</feature>
<feature type="chain" id="PRO_0000053308" description="Myoglobin">
    <location>
        <begin position="2"/>
        <end position="154"/>
    </location>
</feature>
<feature type="domain" description="Globin" evidence="7">
    <location>
        <begin position="2"/>
        <end position="148"/>
    </location>
</feature>
<feature type="binding site" evidence="5">
    <location>
        <position position="65"/>
    </location>
    <ligand>
        <name>nitrite</name>
        <dbReference type="ChEBI" id="CHEBI:16301"/>
    </ligand>
</feature>
<feature type="binding site" evidence="3 7">
    <location>
        <position position="65"/>
    </location>
    <ligand>
        <name>O2</name>
        <dbReference type="ChEBI" id="CHEBI:15379"/>
    </ligand>
</feature>
<feature type="binding site" description="proximal binding residue" evidence="1">
    <location>
        <position position="94"/>
    </location>
    <ligand>
        <name>heme b</name>
        <dbReference type="ChEBI" id="CHEBI:60344"/>
    </ligand>
    <ligandPart>
        <name>Fe</name>
        <dbReference type="ChEBI" id="CHEBI:18248"/>
    </ligandPart>
</feature>
<feature type="modified residue" description="Phosphoserine" evidence="6">
    <location>
        <position position="4"/>
    </location>
</feature>
<feature type="modified residue" description="Phosphothreonine" evidence="4">
    <location>
        <position position="68"/>
    </location>
</feature>
<feature type="sequence variant" description="In minor component.">
    <original>G</original>
    <variation>FKG</variation>
    <location>
        <position position="2"/>
    </location>
</feature>
<comment type="function">
    <text evidence="1">Monomeric heme protein which primary function is to store oxygen and facilitate its diffusion within muscle tissues. Reversibly binds oxygen through a pentacoordinated heme iron and enables its timely and efficient release as needed during periods of heightened demand. Depending on the oxidative conditions of tissues and cells, and in addition to its ability to bind oxygen, it also has a nitrite reductase activity whereby it regulates the production of bioactive nitric oxide. Under stress conditions, like hypoxia and anoxia, it also protects cells against reactive oxygen species thanks to its pseudoperoxidase activity.</text>
</comment>
<comment type="catalytic activity">
    <reaction evidence="1">
        <text>Fe(III)-heme b-[protein] + nitric oxide + H2O = Fe(II)-heme b-[protein] + nitrite + 2 H(+)</text>
        <dbReference type="Rhea" id="RHEA:77711"/>
        <dbReference type="Rhea" id="RHEA-COMP:18975"/>
        <dbReference type="Rhea" id="RHEA-COMP:18976"/>
        <dbReference type="ChEBI" id="CHEBI:15377"/>
        <dbReference type="ChEBI" id="CHEBI:15378"/>
        <dbReference type="ChEBI" id="CHEBI:16301"/>
        <dbReference type="ChEBI" id="CHEBI:16480"/>
        <dbReference type="ChEBI" id="CHEBI:55376"/>
        <dbReference type="ChEBI" id="CHEBI:60344"/>
    </reaction>
    <physiologicalReaction direction="right-to-left" evidence="1">
        <dbReference type="Rhea" id="RHEA:77713"/>
    </physiologicalReaction>
</comment>
<comment type="catalytic activity">
    <reaction evidence="1">
        <text>H2O2 + AH2 = A + 2 H2O</text>
        <dbReference type="Rhea" id="RHEA:30275"/>
        <dbReference type="ChEBI" id="CHEBI:13193"/>
        <dbReference type="ChEBI" id="CHEBI:15377"/>
        <dbReference type="ChEBI" id="CHEBI:16240"/>
        <dbReference type="ChEBI" id="CHEBI:17499"/>
    </reaction>
</comment>
<comment type="subunit">
    <text evidence="2">Monomeric.</text>
</comment>
<comment type="subcellular location">
    <subcellularLocation>
        <location evidence="1">Cytoplasm</location>
        <location evidence="1">Sarcoplasm</location>
    </subcellularLocation>
</comment>
<comment type="miscellaneous">
    <text>Marmoset, woolly monkey, and squirrel monkey have a minor myoglobin component that appears to differ from each major component in having Phe-Lys preceding position 2.</text>
</comment>
<comment type="similarity">
    <text evidence="7">Belongs to the globin family.</text>
</comment>
<evidence type="ECO:0000250" key="1">
    <source>
        <dbReference type="UniProtKB" id="P02144"/>
    </source>
</evidence>
<evidence type="ECO:0000250" key="2">
    <source>
        <dbReference type="UniProtKB" id="P02185"/>
    </source>
</evidence>
<evidence type="ECO:0000250" key="3">
    <source>
        <dbReference type="UniProtKB" id="P02189"/>
    </source>
</evidence>
<evidence type="ECO:0000250" key="4">
    <source>
        <dbReference type="UniProtKB" id="P04247"/>
    </source>
</evidence>
<evidence type="ECO:0000250" key="5">
    <source>
        <dbReference type="UniProtKB" id="P68082"/>
    </source>
</evidence>
<evidence type="ECO:0000250" key="6">
    <source>
        <dbReference type="UniProtKB" id="Q9QZ76"/>
    </source>
</evidence>
<evidence type="ECO:0000255" key="7">
    <source>
        <dbReference type="PROSITE-ProRule" id="PRU00238"/>
    </source>
</evidence>
<evidence type="ECO:0000269" key="8">
    <source>
    </source>
</evidence>
<sequence>MGLSDGEWQLVLNIWGKVEADIPSHGQEVLISLFKGHPETLEKFDKFKHLKSEDEMKASEELKKHGVTVLTALGGILKKKGQHEAELKPLAQSHATKHKIPVKYLEFISDAIIHALQKKHPGDFGADAQGAMKKALELFRNDMAAKYKELGFQG</sequence>
<proteinExistence type="evidence at protein level"/>
<name>MYG_LAGLA</name>
<accession>P02154</accession>
<keyword id="KW-0963">Cytoplasm</keyword>
<keyword id="KW-0903">Direct protein sequencing</keyword>
<keyword id="KW-0349">Heme</keyword>
<keyword id="KW-0408">Iron</keyword>
<keyword id="KW-0479">Metal-binding</keyword>
<keyword id="KW-0514">Muscle protein</keyword>
<keyword id="KW-0560">Oxidoreductase</keyword>
<keyword id="KW-0561">Oxygen transport</keyword>
<keyword id="KW-0597">Phosphoprotein</keyword>
<keyword id="KW-0813">Transport</keyword>
<dbReference type="EC" id="1.7.-.-" evidence="1"/>
<dbReference type="EC" id="1.11.1.-" evidence="1"/>
<dbReference type="PIR" id="B90587">
    <property type="entry name" value="MYMQW"/>
</dbReference>
<dbReference type="SMR" id="P02154"/>
<dbReference type="GO" id="GO:0070062">
    <property type="term" value="C:extracellular exosome"/>
    <property type="evidence" value="ECO:0007669"/>
    <property type="project" value="TreeGrafter"/>
</dbReference>
<dbReference type="GO" id="GO:0016528">
    <property type="term" value="C:sarcoplasm"/>
    <property type="evidence" value="ECO:0000250"/>
    <property type="project" value="UniProtKB"/>
</dbReference>
<dbReference type="GO" id="GO:0020037">
    <property type="term" value="F:heme binding"/>
    <property type="evidence" value="ECO:0007669"/>
    <property type="project" value="InterPro"/>
</dbReference>
<dbReference type="GO" id="GO:0046872">
    <property type="term" value="F:metal ion binding"/>
    <property type="evidence" value="ECO:0007669"/>
    <property type="project" value="UniProtKB-KW"/>
</dbReference>
<dbReference type="GO" id="GO:0098809">
    <property type="term" value="F:nitrite reductase activity"/>
    <property type="evidence" value="ECO:0000250"/>
    <property type="project" value="UniProtKB"/>
</dbReference>
<dbReference type="GO" id="GO:0019825">
    <property type="term" value="F:oxygen binding"/>
    <property type="evidence" value="ECO:0007669"/>
    <property type="project" value="InterPro"/>
</dbReference>
<dbReference type="GO" id="GO:0005344">
    <property type="term" value="F:oxygen carrier activity"/>
    <property type="evidence" value="ECO:0000250"/>
    <property type="project" value="UniProtKB"/>
</dbReference>
<dbReference type="GO" id="GO:0004601">
    <property type="term" value="F:peroxidase activity"/>
    <property type="evidence" value="ECO:0000250"/>
    <property type="project" value="UniProtKB"/>
</dbReference>
<dbReference type="GO" id="GO:0019430">
    <property type="term" value="P:removal of superoxide radicals"/>
    <property type="evidence" value="ECO:0000250"/>
    <property type="project" value="UniProtKB"/>
</dbReference>
<dbReference type="Gene3D" id="6.10.140.2100">
    <property type="match status" value="1"/>
</dbReference>
<dbReference type="Gene3D" id="6.10.140.2110">
    <property type="match status" value="1"/>
</dbReference>
<dbReference type="InterPro" id="IPR000971">
    <property type="entry name" value="Globin"/>
</dbReference>
<dbReference type="InterPro" id="IPR009050">
    <property type="entry name" value="Globin-like_sf"/>
</dbReference>
<dbReference type="InterPro" id="IPR002335">
    <property type="entry name" value="Myoglobin"/>
</dbReference>
<dbReference type="PANTHER" id="PTHR47132">
    <property type="entry name" value="MYOGLOBIN"/>
    <property type="match status" value="1"/>
</dbReference>
<dbReference type="PANTHER" id="PTHR47132:SF1">
    <property type="entry name" value="MYOGLOBIN"/>
    <property type="match status" value="1"/>
</dbReference>
<dbReference type="Pfam" id="PF00042">
    <property type="entry name" value="Globin"/>
    <property type="match status" value="1"/>
</dbReference>
<dbReference type="PRINTS" id="PR00613">
    <property type="entry name" value="MYOGLOBIN"/>
</dbReference>
<dbReference type="SUPFAM" id="SSF46458">
    <property type="entry name" value="Globin-like"/>
    <property type="match status" value="1"/>
</dbReference>
<dbReference type="PROSITE" id="PS01033">
    <property type="entry name" value="GLOBIN"/>
    <property type="match status" value="1"/>
</dbReference>
<protein>
    <recommendedName>
        <fullName>Myoglobin</fullName>
    </recommendedName>
    <alternativeName>
        <fullName evidence="1">Nitrite reductase MB</fullName>
        <ecNumber evidence="1">1.7.-.-</ecNumber>
    </alternativeName>
    <alternativeName>
        <fullName evidence="1">Pseudoperoxidase MB</fullName>
        <ecNumber evidence="1">1.11.1.-</ecNumber>
    </alternativeName>
</protein>
<organism>
    <name type="scientific">Lagothrix lagotricha</name>
    <name type="common">Brown woolly monkey</name>
    <name type="synonym">Humboldt's woolly monkey</name>
    <dbReference type="NCBI Taxonomy" id="9519"/>
    <lineage>
        <taxon>Eukaryota</taxon>
        <taxon>Metazoa</taxon>
        <taxon>Chordata</taxon>
        <taxon>Craniata</taxon>
        <taxon>Vertebrata</taxon>
        <taxon>Euteleostomi</taxon>
        <taxon>Mammalia</taxon>
        <taxon>Eutheria</taxon>
        <taxon>Euarchontoglires</taxon>
        <taxon>Primates</taxon>
        <taxon>Haplorrhini</taxon>
        <taxon>Platyrrhini</taxon>
        <taxon>Atelidae</taxon>
        <taxon>Atelinae</taxon>
        <taxon>Lagothrix</taxon>
    </lineage>
</organism>